<organismHost>
    <name type="scientific">Homo sapiens</name>
    <name type="common">Human</name>
    <dbReference type="NCBI Taxonomy" id="9606"/>
</organismHost>
<accession>P20561</accession>
<name>YVFC_VACCC</name>
<dbReference type="EMBL" id="M35027">
    <property type="protein sequence ID" value="AAA48020.1"/>
    <property type="molecule type" value="Genomic_DNA"/>
</dbReference>
<dbReference type="PIR" id="B42506">
    <property type="entry name" value="B42506"/>
</dbReference>
<dbReference type="Proteomes" id="UP000008269">
    <property type="component" value="Segment"/>
</dbReference>
<sequence length="96" mass="11579">MYPLLSPIGLLFYTRHCFYGIKEIVFFITIFNISIDQKTIHFRMNVFNGHLKSVETSSLGNLYFCTKSFRQIFIHYSVTGCKKRQYMFYKIFFVWC</sequence>
<organism>
    <name type="scientific">Vaccinia virus (strain Copenhagen)</name>
    <name type="common">VACV</name>
    <dbReference type="NCBI Taxonomy" id="10249"/>
    <lineage>
        <taxon>Viruses</taxon>
        <taxon>Varidnaviria</taxon>
        <taxon>Bamfordvirae</taxon>
        <taxon>Nucleocytoviricota</taxon>
        <taxon>Pokkesviricetes</taxon>
        <taxon>Chitovirales</taxon>
        <taxon>Poxviridae</taxon>
        <taxon>Chordopoxvirinae</taxon>
        <taxon>Orthopoxvirus</taxon>
        <taxon>Vaccinia virus</taxon>
    </lineage>
</organism>
<protein>
    <recommendedName>
        <fullName>Uncharacterized 11.6 kDa protein</fullName>
    </recommendedName>
</protein>
<reference key="1">
    <citation type="journal article" date="1990" name="Virology">
        <title>The complete DNA sequence of vaccinia virus.</title>
        <authorList>
            <person name="Goebel S.J."/>
            <person name="Johnson G.P."/>
            <person name="Perkus M.E."/>
            <person name="Davis S.W."/>
            <person name="Winslow J.P."/>
            <person name="Paoletti E."/>
        </authorList>
    </citation>
    <scope>NUCLEOTIDE SEQUENCE [LARGE SCALE GENOMIC DNA]</scope>
</reference>
<reference key="2">
    <citation type="journal article" date="1990" name="Virology">
        <title>Appendix to 'The complete DNA sequence of vaccinia virus'.</title>
        <authorList>
            <person name="Goebel S.J."/>
            <person name="Johnson G.P."/>
            <person name="Perkus M.E."/>
            <person name="Davis S.W."/>
            <person name="Winslow J.P."/>
            <person name="Paoletti E."/>
        </authorList>
    </citation>
    <scope>COMPLETE GENOME</scope>
</reference>
<keyword id="KW-1185">Reference proteome</keyword>
<gene>
    <name type="ORF">F ORF C</name>
</gene>
<feature type="chain" id="PRO_0000099713" description="Uncharacterized 11.6 kDa protein">
    <location>
        <begin position="1"/>
        <end position="96"/>
    </location>
</feature>
<proteinExistence type="predicted"/>